<dbReference type="EMBL" id="AE014074">
    <property type="protein sequence ID" value="AAM80412.1"/>
    <property type="molecule type" value="Genomic_DNA"/>
</dbReference>
<dbReference type="RefSeq" id="WP_002992189.1">
    <property type="nucleotide sequence ID" value="NC_004070.1"/>
</dbReference>
<dbReference type="SMR" id="P0DC58"/>
<dbReference type="KEGG" id="spg:SpyM3_1805"/>
<dbReference type="HOGENOM" id="CLU_004131_4_1_9"/>
<dbReference type="Proteomes" id="UP000000564">
    <property type="component" value="Chromosome"/>
</dbReference>
<dbReference type="GO" id="GO:0032300">
    <property type="term" value="C:mismatch repair complex"/>
    <property type="evidence" value="ECO:0007669"/>
    <property type="project" value="InterPro"/>
</dbReference>
<dbReference type="GO" id="GO:0005524">
    <property type="term" value="F:ATP binding"/>
    <property type="evidence" value="ECO:0007669"/>
    <property type="project" value="InterPro"/>
</dbReference>
<dbReference type="GO" id="GO:0016887">
    <property type="term" value="F:ATP hydrolysis activity"/>
    <property type="evidence" value="ECO:0007669"/>
    <property type="project" value="InterPro"/>
</dbReference>
<dbReference type="GO" id="GO:0140664">
    <property type="term" value="F:ATP-dependent DNA damage sensor activity"/>
    <property type="evidence" value="ECO:0007669"/>
    <property type="project" value="InterPro"/>
</dbReference>
<dbReference type="GO" id="GO:0030983">
    <property type="term" value="F:mismatched DNA binding"/>
    <property type="evidence" value="ECO:0007669"/>
    <property type="project" value="InterPro"/>
</dbReference>
<dbReference type="GO" id="GO:0006298">
    <property type="term" value="P:mismatch repair"/>
    <property type="evidence" value="ECO:0007669"/>
    <property type="project" value="UniProtKB-UniRule"/>
</dbReference>
<dbReference type="CDD" id="cd16926">
    <property type="entry name" value="HATPase_MutL-MLH-PMS-like"/>
    <property type="match status" value="1"/>
</dbReference>
<dbReference type="CDD" id="cd00782">
    <property type="entry name" value="MutL_Trans"/>
    <property type="match status" value="1"/>
</dbReference>
<dbReference type="FunFam" id="3.30.1370.100:FF:000004">
    <property type="entry name" value="DNA mismatch repair endonuclease MutL"/>
    <property type="match status" value="1"/>
</dbReference>
<dbReference type="FunFam" id="3.30.565.10:FF:000003">
    <property type="entry name" value="DNA mismatch repair endonuclease MutL"/>
    <property type="match status" value="1"/>
</dbReference>
<dbReference type="Gene3D" id="3.30.230.10">
    <property type="match status" value="1"/>
</dbReference>
<dbReference type="Gene3D" id="3.30.565.10">
    <property type="entry name" value="Histidine kinase-like ATPase, C-terminal domain"/>
    <property type="match status" value="1"/>
</dbReference>
<dbReference type="Gene3D" id="3.30.1540.20">
    <property type="entry name" value="MutL, C-terminal domain, dimerisation subdomain"/>
    <property type="match status" value="1"/>
</dbReference>
<dbReference type="Gene3D" id="3.30.1370.100">
    <property type="entry name" value="MutL, C-terminal domain, regulatory subdomain"/>
    <property type="match status" value="1"/>
</dbReference>
<dbReference type="HAMAP" id="MF_00149">
    <property type="entry name" value="DNA_mis_repair"/>
    <property type="match status" value="1"/>
</dbReference>
<dbReference type="InterPro" id="IPR014762">
    <property type="entry name" value="DNA_mismatch_repair_CS"/>
</dbReference>
<dbReference type="InterPro" id="IPR020667">
    <property type="entry name" value="DNA_mismatch_repair_MutL"/>
</dbReference>
<dbReference type="InterPro" id="IPR013507">
    <property type="entry name" value="DNA_mismatch_S5_2-like"/>
</dbReference>
<dbReference type="InterPro" id="IPR036890">
    <property type="entry name" value="HATPase_C_sf"/>
</dbReference>
<dbReference type="InterPro" id="IPR002099">
    <property type="entry name" value="MutL/Mlh/PMS"/>
</dbReference>
<dbReference type="InterPro" id="IPR038973">
    <property type="entry name" value="MutL/Mlh/Pms-like"/>
</dbReference>
<dbReference type="InterPro" id="IPR014790">
    <property type="entry name" value="MutL_C"/>
</dbReference>
<dbReference type="InterPro" id="IPR042120">
    <property type="entry name" value="MutL_C_dimsub"/>
</dbReference>
<dbReference type="InterPro" id="IPR042121">
    <property type="entry name" value="MutL_C_regsub"/>
</dbReference>
<dbReference type="InterPro" id="IPR037198">
    <property type="entry name" value="MutL_C_sf"/>
</dbReference>
<dbReference type="InterPro" id="IPR020568">
    <property type="entry name" value="Ribosomal_Su5_D2-typ_SF"/>
</dbReference>
<dbReference type="InterPro" id="IPR014721">
    <property type="entry name" value="Ribsml_uS5_D2-typ_fold_subgr"/>
</dbReference>
<dbReference type="NCBIfam" id="TIGR00585">
    <property type="entry name" value="mutl"/>
    <property type="match status" value="1"/>
</dbReference>
<dbReference type="NCBIfam" id="NF000950">
    <property type="entry name" value="PRK00095.1-3"/>
    <property type="match status" value="1"/>
</dbReference>
<dbReference type="PANTHER" id="PTHR10073">
    <property type="entry name" value="DNA MISMATCH REPAIR PROTEIN MLH, PMS, MUTL"/>
    <property type="match status" value="1"/>
</dbReference>
<dbReference type="PANTHER" id="PTHR10073:SF12">
    <property type="entry name" value="DNA MISMATCH REPAIR PROTEIN MLH1"/>
    <property type="match status" value="1"/>
</dbReference>
<dbReference type="Pfam" id="PF01119">
    <property type="entry name" value="DNA_mis_repair"/>
    <property type="match status" value="1"/>
</dbReference>
<dbReference type="Pfam" id="PF13589">
    <property type="entry name" value="HATPase_c_3"/>
    <property type="match status" value="1"/>
</dbReference>
<dbReference type="Pfam" id="PF08676">
    <property type="entry name" value="MutL_C"/>
    <property type="match status" value="1"/>
</dbReference>
<dbReference type="SMART" id="SM01340">
    <property type="entry name" value="DNA_mis_repair"/>
    <property type="match status" value="1"/>
</dbReference>
<dbReference type="SMART" id="SM00853">
    <property type="entry name" value="MutL_C"/>
    <property type="match status" value="1"/>
</dbReference>
<dbReference type="SUPFAM" id="SSF55874">
    <property type="entry name" value="ATPase domain of HSP90 chaperone/DNA topoisomerase II/histidine kinase"/>
    <property type="match status" value="1"/>
</dbReference>
<dbReference type="SUPFAM" id="SSF118116">
    <property type="entry name" value="DNA mismatch repair protein MutL"/>
    <property type="match status" value="1"/>
</dbReference>
<dbReference type="SUPFAM" id="SSF54211">
    <property type="entry name" value="Ribosomal protein S5 domain 2-like"/>
    <property type="match status" value="1"/>
</dbReference>
<dbReference type="PROSITE" id="PS00058">
    <property type="entry name" value="DNA_MISMATCH_REPAIR_1"/>
    <property type="match status" value="1"/>
</dbReference>
<proteinExistence type="inferred from homology"/>
<reference key="1">
    <citation type="journal article" date="2002" name="Proc. Natl. Acad. Sci. U.S.A.">
        <title>Genome sequence of a serotype M3 strain of group A Streptococcus: phage-encoded toxins, the high-virulence phenotype, and clone emergence.</title>
        <authorList>
            <person name="Beres S.B."/>
            <person name="Sylva G.L."/>
            <person name="Barbian K.D."/>
            <person name="Lei B."/>
            <person name="Hoff J.S."/>
            <person name="Mammarella N.D."/>
            <person name="Liu M.-Y."/>
            <person name="Smoot J.C."/>
            <person name="Porcella S.F."/>
            <person name="Parkins L.D."/>
            <person name="Campbell D.S."/>
            <person name="Smith T.M."/>
            <person name="McCormick J.K."/>
            <person name="Leung D.Y.M."/>
            <person name="Schlievert P.M."/>
            <person name="Musser J.M."/>
        </authorList>
    </citation>
    <scope>NUCLEOTIDE SEQUENCE [LARGE SCALE GENOMIC DNA]</scope>
    <source>
        <strain>ATCC BAA-595 / MGAS315</strain>
    </source>
</reference>
<evidence type="ECO:0000255" key="1">
    <source>
        <dbReference type="HAMAP-Rule" id="MF_00149"/>
    </source>
</evidence>
<accession>P0DC58</accession>
<accession>Q8K5J6</accession>
<organism>
    <name type="scientific">Streptococcus pyogenes serotype M3 (strain ATCC BAA-595 / MGAS315)</name>
    <dbReference type="NCBI Taxonomy" id="198466"/>
    <lineage>
        <taxon>Bacteria</taxon>
        <taxon>Bacillati</taxon>
        <taxon>Bacillota</taxon>
        <taxon>Bacilli</taxon>
        <taxon>Lactobacillales</taxon>
        <taxon>Streptococcaceae</taxon>
        <taxon>Streptococcus</taxon>
    </lineage>
</organism>
<protein>
    <recommendedName>
        <fullName evidence="1">DNA mismatch repair protein MutL</fullName>
    </recommendedName>
</protein>
<gene>
    <name evidence="1" type="primary">mutL</name>
    <name type="ordered locus">SpyM3_1805</name>
</gene>
<feature type="chain" id="PRO_0000177980" description="DNA mismatch repair protein MutL">
    <location>
        <begin position="1"/>
        <end position="660"/>
    </location>
</feature>
<comment type="function">
    <text evidence="1">This protein is involved in the repair of mismatches in DNA. It is required for dam-dependent methyl-directed DNA mismatch repair. May act as a 'molecular matchmaker', a protein that promotes the formation of a stable complex between two or more DNA-binding proteins in an ATP-dependent manner without itself being part of a final effector complex.</text>
</comment>
<comment type="similarity">
    <text evidence="1">Belongs to the DNA mismatch repair MutL/HexB family.</text>
</comment>
<sequence>MTNIIELPEVLANQIAAGEVVERPASVVKELVENAIDAKSSQITVEIEESGLKMIQVTDNGEGMSHEDLPLSLRRHATSKIKSQSDLFRIRTLGFRGEALPSVASISKITIKTATKEVTHGSLLIATGGEIETLEAISTPTGTKIKVENLFYNTPARLKYMKSLQAELAHIVDVVNRLSLAHPEVAFTLISDGRQLTQTSGTGDLRQAIAGIYGLNTTKKMLAISNADLDFEVSGYVSLPELTRANRNYMTILVNGRYIKNFLLNRAILDGYGSKLMVGRFPIVVIDIQIDPYLADVNVHPTKQEVRISKERELMALISTAISESLKEQDLIPDALENLAKSSTRHFSKPEQTQLPLQSRGLYYDPQKNDFFVKESAVSEKIPETDFYFGTVDNSVKVEKAELLPHSEEVIGPSSVKHASRPQNTFTETDHPNLDLKNRQKLSQMLTRLENEEQSVFPELDYFGQMHGTYLFAQGKDGLFIIDQHAAQERVKYEYYRDKIGEVDSSLQQLLVPYLFEFSGSDFINLQEKMALLNEVGIFLEVYGHNTFILREHPIWMKEEEIASGVYEMCDMLLLTNEVSIKTYRAELAIMMSCKRSIKANHSLDDYSARNLLLQLAQCQNPYNCPHGRPVLINFSKADMEKMFRRIQENHTSLRELGKY</sequence>
<name>MUTL_STRP3</name>
<keyword id="KW-0227">DNA damage</keyword>
<keyword id="KW-0234">DNA repair</keyword>